<organism>
    <name type="scientific">Streptococcus thermophilus (strain ATCC BAA-491 / LMD-9)</name>
    <dbReference type="NCBI Taxonomy" id="322159"/>
    <lineage>
        <taxon>Bacteria</taxon>
        <taxon>Bacillati</taxon>
        <taxon>Bacillota</taxon>
        <taxon>Bacilli</taxon>
        <taxon>Lactobacillales</taxon>
        <taxon>Streptococcaceae</taxon>
        <taxon>Streptococcus</taxon>
    </lineage>
</organism>
<gene>
    <name evidence="1" type="primary">rplB</name>
    <name type="ordered locus">STER_1904</name>
</gene>
<feature type="chain" id="PRO_0000310029" description="Large ribosomal subunit protein uL2">
    <location>
        <begin position="1"/>
        <end position="277"/>
    </location>
</feature>
<feature type="region of interest" description="Disordered" evidence="2">
    <location>
        <begin position="222"/>
        <end position="277"/>
    </location>
</feature>
<feature type="compositionally biased region" description="Basic and acidic residues" evidence="2">
    <location>
        <begin position="264"/>
        <end position="277"/>
    </location>
</feature>
<proteinExistence type="inferred from homology"/>
<reference key="1">
    <citation type="journal article" date="2006" name="Proc. Natl. Acad. Sci. U.S.A.">
        <title>Comparative genomics of the lactic acid bacteria.</title>
        <authorList>
            <person name="Makarova K.S."/>
            <person name="Slesarev A."/>
            <person name="Wolf Y.I."/>
            <person name="Sorokin A."/>
            <person name="Mirkin B."/>
            <person name="Koonin E.V."/>
            <person name="Pavlov A."/>
            <person name="Pavlova N."/>
            <person name="Karamychev V."/>
            <person name="Polouchine N."/>
            <person name="Shakhova V."/>
            <person name="Grigoriev I."/>
            <person name="Lou Y."/>
            <person name="Rohksar D."/>
            <person name="Lucas S."/>
            <person name="Huang K."/>
            <person name="Goodstein D.M."/>
            <person name="Hawkins T."/>
            <person name="Plengvidhya V."/>
            <person name="Welker D."/>
            <person name="Hughes J."/>
            <person name="Goh Y."/>
            <person name="Benson A."/>
            <person name="Baldwin K."/>
            <person name="Lee J.-H."/>
            <person name="Diaz-Muniz I."/>
            <person name="Dosti B."/>
            <person name="Smeianov V."/>
            <person name="Wechter W."/>
            <person name="Barabote R."/>
            <person name="Lorca G."/>
            <person name="Altermann E."/>
            <person name="Barrangou R."/>
            <person name="Ganesan B."/>
            <person name="Xie Y."/>
            <person name="Rawsthorne H."/>
            <person name="Tamir D."/>
            <person name="Parker C."/>
            <person name="Breidt F."/>
            <person name="Broadbent J.R."/>
            <person name="Hutkins R."/>
            <person name="O'Sullivan D."/>
            <person name="Steele J."/>
            <person name="Unlu G."/>
            <person name="Saier M.H. Jr."/>
            <person name="Klaenhammer T."/>
            <person name="Richardson P."/>
            <person name="Kozyavkin S."/>
            <person name="Weimer B.C."/>
            <person name="Mills D.A."/>
        </authorList>
    </citation>
    <scope>NUCLEOTIDE SEQUENCE [LARGE SCALE GENOMIC DNA]</scope>
    <source>
        <strain>ATCC BAA-491 / LMD-9</strain>
    </source>
</reference>
<comment type="function">
    <text evidence="1">One of the primary rRNA binding proteins. Required for association of the 30S and 50S subunits to form the 70S ribosome, for tRNA binding and peptide bond formation. It has been suggested to have peptidyltransferase activity; this is somewhat controversial. Makes several contacts with the 16S rRNA in the 70S ribosome.</text>
</comment>
<comment type="subunit">
    <text evidence="1">Part of the 50S ribosomal subunit. Forms a bridge to the 30S subunit in the 70S ribosome.</text>
</comment>
<comment type="similarity">
    <text evidence="1">Belongs to the universal ribosomal protein uL2 family.</text>
</comment>
<name>RL2_STRTD</name>
<evidence type="ECO:0000255" key="1">
    <source>
        <dbReference type="HAMAP-Rule" id="MF_01320"/>
    </source>
</evidence>
<evidence type="ECO:0000256" key="2">
    <source>
        <dbReference type="SAM" id="MobiDB-lite"/>
    </source>
</evidence>
<evidence type="ECO:0000305" key="3"/>
<keyword id="KW-0687">Ribonucleoprotein</keyword>
<keyword id="KW-0689">Ribosomal protein</keyword>
<keyword id="KW-0694">RNA-binding</keyword>
<keyword id="KW-0699">rRNA-binding</keyword>
<sequence>MGIKVYKPTTNGRRNMTSLDFAEITTSTPEKSLLVSLKNKAGRNNNGRITVRHQGGGHKRHYRLIDFKRNKDGVEAVVKTIEYDPNRTANIALVHYTDGVKAYIIAPKGLEVGQRIVSGPDADIKVGNALPLANIPVGTVIHNIELKPGKGAELVRAAGASAQVLGQEGKYVLVRLQSGEVRMILGTCRATIGTVGNEQQSLINLGKAGRNRWKGVRPTVRGSVMNPNDHPHGGGEGKAPVGRKAPSTPWGKPALGLKTRNKKAKSDKLIVRRRNEK</sequence>
<accession>Q03IF4</accession>
<dbReference type="EMBL" id="CP000419">
    <property type="protein sequence ID" value="ABJ67018.1"/>
    <property type="molecule type" value="Genomic_DNA"/>
</dbReference>
<dbReference type="RefSeq" id="WP_002952161.1">
    <property type="nucleotide sequence ID" value="NC_008532.1"/>
</dbReference>
<dbReference type="SMR" id="Q03IF4"/>
<dbReference type="GeneID" id="66899659"/>
<dbReference type="KEGG" id="ste:STER_1904"/>
<dbReference type="HOGENOM" id="CLU_036235_2_1_9"/>
<dbReference type="GO" id="GO:0015934">
    <property type="term" value="C:large ribosomal subunit"/>
    <property type="evidence" value="ECO:0007669"/>
    <property type="project" value="InterPro"/>
</dbReference>
<dbReference type="GO" id="GO:0019843">
    <property type="term" value="F:rRNA binding"/>
    <property type="evidence" value="ECO:0007669"/>
    <property type="project" value="UniProtKB-UniRule"/>
</dbReference>
<dbReference type="GO" id="GO:0003735">
    <property type="term" value="F:structural constituent of ribosome"/>
    <property type="evidence" value="ECO:0007669"/>
    <property type="project" value="InterPro"/>
</dbReference>
<dbReference type="GO" id="GO:0016740">
    <property type="term" value="F:transferase activity"/>
    <property type="evidence" value="ECO:0007669"/>
    <property type="project" value="InterPro"/>
</dbReference>
<dbReference type="GO" id="GO:0002181">
    <property type="term" value="P:cytoplasmic translation"/>
    <property type="evidence" value="ECO:0007669"/>
    <property type="project" value="TreeGrafter"/>
</dbReference>
<dbReference type="FunFam" id="2.30.30.30:FF:000001">
    <property type="entry name" value="50S ribosomal protein L2"/>
    <property type="match status" value="1"/>
</dbReference>
<dbReference type="FunFam" id="2.40.50.140:FF:000003">
    <property type="entry name" value="50S ribosomal protein L2"/>
    <property type="match status" value="1"/>
</dbReference>
<dbReference type="FunFam" id="4.10.950.10:FF:000001">
    <property type="entry name" value="50S ribosomal protein L2"/>
    <property type="match status" value="1"/>
</dbReference>
<dbReference type="Gene3D" id="2.30.30.30">
    <property type="match status" value="1"/>
</dbReference>
<dbReference type="Gene3D" id="2.40.50.140">
    <property type="entry name" value="Nucleic acid-binding proteins"/>
    <property type="match status" value="1"/>
</dbReference>
<dbReference type="Gene3D" id="4.10.950.10">
    <property type="entry name" value="Ribosomal protein L2, domain 3"/>
    <property type="match status" value="1"/>
</dbReference>
<dbReference type="HAMAP" id="MF_01320_B">
    <property type="entry name" value="Ribosomal_uL2_B"/>
    <property type="match status" value="1"/>
</dbReference>
<dbReference type="InterPro" id="IPR012340">
    <property type="entry name" value="NA-bd_OB-fold"/>
</dbReference>
<dbReference type="InterPro" id="IPR014722">
    <property type="entry name" value="Rib_uL2_dom2"/>
</dbReference>
<dbReference type="InterPro" id="IPR002171">
    <property type="entry name" value="Ribosomal_uL2"/>
</dbReference>
<dbReference type="InterPro" id="IPR005880">
    <property type="entry name" value="Ribosomal_uL2_bac/org-type"/>
</dbReference>
<dbReference type="InterPro" id="IPR022669">
    <property type="entry name" value="Ribosomal_uL2_C"/>
</dbReference>
<dbReference type="InterPro" id="IPR022671">
    <property type="entry name" value="Ribosomal_uL2_CS"/>
</dbReference>
<dbReference type="InterPro" id="IPR014726">
    <property type="entry name" value="Ribosomal_uL2_dom3"/>
</dbReference>
<dbReference type="InterPro" id="IPR022666">
    <property type="entry name" value="Ribosomal_uL2_RNA-bd_dom"/>
</dbReference>
<dbReference type="InterPro" id="IPR008991">
    <property type="entry name" value="Translation_prot_SH3-like_sf"/>
</dbReference>
<dbReference type="NCBIfam" id="TIGR01171">
    <property type="entry name" value="rplB_bact"/>
    <property type="match status" value="1"/>
</dbReference>
<dbReference type="PANTHER" id="PTHR13691:SF5">
    <property type="entry name" value="LARGE RIBOSOMAL SUBUNIT PROTEIN UL2M"/>
    <property type="match status" value="1"/>
</dbReference>
<dbReference type="PANTHER" id="PTHR13691">
    <property type="entry name" value="RIBOSOMAL PROTEIN L2"/>
    <property type="match status" value="1"/>
</dbReference>
<dbReference type="Pfam" id="PF00181">
    <property type="entry name" value="Ribosomal_L2"/>
    <property type="match status" value="1"/>
</dbReference>
<dbReference type="Pfam" id="PF03947">
    <property type="entry name" value="Ribosomal_L2_C"/>
    <property type="match status" value="1"/>
</dbReference>
<dbReference type="PIRSF" id="PIRSF002158">
    <property type="entry name" value="Ribosomal_L2"/>
    <property type="match status" value="1"/>
</dbReference>
<dbReference type="SMART" id="SM01383">
    <property type="entry name" value="Ribosomal_L2"/>
    <property type="match status" value="1"/>
</dbReference>
<dbReference type="SMART" id="SM01382">
    <property type="entry name" value="Ribosomal_L2_C"/>
    <property type="match status" value="1"/>
</dbReference>
<dbReference type="SUPFAM" id="SSF50249">
    <property type="entry name" value="Nucleic acid-binding proteins"/>
    <property type="match status" value="1"/>
</dbReference>
<dbReference type="SUPFAM" id="SSF50104">
    <property type="entry name" value="Translation proteins SH3-like domain"/>
    <property type="match status" value="1"/>
</dbReference>
<dbReference type="PROSITE" id="PS00467">
    <property type="entry name" value="RIBOSOMAL_L2"/>
    <property type="match status" value="1"/>
</dbReference>
<protein>
    <recommendedName>
        <fullName evidence="1">Large ribosomal subunit protein uL2</fullName>
    </recommendedName>
    <alternativeName>
        <fullName evidence="3">50S ribosomal protein L2</fullName>
    </alternativeName>
</protein>